<keyword id="KW-0067">ATP-binding</keyword>
<keyword id="KW-0963">Cytoplasm</keyword>
<keyword id="KW-0418">Kinase</keyword>
<keyword id="KW-0460">Magnesium</keyword>
<keyword id="KW-0479">Metal-binding</keyword>
<keyword id="KW-0546">Nucleotide metabolism</keyword>
<keyword id="KW-0547">Nucleotide-binding</keyword>
<keyword id="KW-0597">Phosphoprotein</keyword>
<keyword id="KW-1185">Reference proteome</keyword>
<keyword id="KW-0808">Transferase</keyword>
<evidence type="ECO:0000255" key="1">
    <source>
        <dbReference type="HAMAP-Rule" id="MF_00451"/>
    </source>
</evidence>
<evidence type="ECO:0000305" key="2"/>
<organism>
    <name type="scientific">Gluconacetobacter diazotrophicus (strain ATCC 49037 / DSM 5601 / CCUG 37298 / CIP 103539 / LMG 7603 / PAl5)</name>
    <dbReference type="NCBI Taxonomy" id="272568"/>
    <lineage>
        <taxon>Bacteria</taxon>
        <taxon>Pseudomonadati</taxon>
        <taxon>Pseudomonadota</taxon>
        <taxon>Alphaproteobacteria</taxon>
        <taxon>Acetobacterales</taxon>
        <taxon>Acetobacteraceae</taxon>
        <taxon>Gluconacetobacter</taxon>
    </lineage>
</organism>
<proteinExistence type="inferred from homology"/>
<reference key="1">
    <citation type="journal article" date="2009" name="BMC Genomics">
        <title>Complete genome sequence of the sugarcane nitrogen-fixing endophyte Gluconacetobacter diazotrophicus Pal5.</title>
        <authorList>
            <person name="Bertalan M."/>
            <person name="Albano R."/>
            <person name="de Padua V."/>
            <person name="Rouws L."/>
            <person name="Rojas C."/>
            <person name="Hemerly A."/>
            <person name="Teixeira K."/>
            <person name="Schwab S."/>
            <person name="Araujo J."/>
            <person name="Oliveira A."/>
            <person name="Franca L."/>
            <person name="Magalhaes V."/>
            <person name="Alqueres S."/>
            <person name="Cardoso A."/>
            <person name="Almeida W."/>
            <person name="Loureiro M.M."/>
            <person name="Nogueira E."/>
            <person name="Cidade D."/>
            <person name="Oliveira D."/>
            <person name="Simao T."/>
            <person name="Macedo J."/>
            <person name="Valadao A."/>
            <person name="Dreschsel M."/>
            <person name="Freitas F."/>
            <person name="Vidal M."/>
            <person name="Guedes H."/>
            <person name="Rodrigues E."/>
            <person name="Meneses C."/>
            <person name="Brioso P."/>
            <person name="Pozzer L."/>
            <person name="Figueiredo D."/>
            <person name="Montano H."/>
            <person name="Junior J."/>
            <person name="de Souza Filho G."/>
            <person name="Martin Quintana Flores V."/>
            <person name="Ferreira B."/>
            <person name="Branco A."/>
            <person name="Gonzalez P."/>
            <person name="Guillobel H."/>
            <person name="Lemos M."/>
            <person name="Seibel L."/>
            <person name="Macedo J."/>
            <person name="Alves-Ferreira M."/>
            <person name="Sachetto-Martins G."/>
            <person name="Coelho A."/>
            <person name="Santos E."/>
            <person name="Amaral G."/>
            <person name="Neves A."/>
            <person name="Pacheco A.B."/>
            <person name="Carvalho D."/>
            <person name="Lery L."/>
            <person name="Bisch P."/>
            <person name="Rossle S.C."/>
            <person name="Urmenyi T."/>
            <person name="Rael Pereira A."/>
            <person name="Silva R."/>
            <person name="Rondinelli E."/>
            <person name="von Kruger W."/>
            <person name="Martins O."/>
            <person name="Baldani J.I."/>
            <person name="Ferreira P.C."/>
        </authorList>
    </citation>
    <scope>NUCLEOTIDE SEQUENCE [LARGE SCALE GENOMIC DNA]</scope>
    <source>
        <strain>ATCC 49037 / DSM 5601 / CCUG 37298 / CIP 103539 / LMG 7603 / PAl5</strain>
    </source>
</reference>
<reference key="2">
    <citation type="journal article" date="2010" name="Stand. Genomic Sci.">
        <title>Two genome sequences of the same bacterial strain, Gluconacetobacter diazotrophicus PAl 5, suggest a new standard in genome sequence submission.</title>
        <authorList>
            <person name="Giongo A."/>
            <person name="Tyler H.L."/>
            <person name="Zipperer U.N."/>
            <person name="Triplett E.W."/>
        </authorList>
    </citation>
    <scope>NUCLEOTIDE SEQUENCE [LARGE SCALE GENOMIC DNA]</scope>
    <source>
        <strain>ATCC 49037 / DSM 5601 / CCUG 37298 / CIP 103539 / LMG 7603 / PAl5</strain>
    </source>
</reference>
<comment type="function">
    <text evidence="1">Major role in the synthesis of nucleoside triphosphates other than ATP. The ATP gamma phosphate is transferred to the NDP beta phosphate via a ping-pong mechanism, using a phosphorylated active-site intermediate.</text>
</comment>
<comment type="catalytic activity">
    <reaction evidence="1">
        <text>a 2'-deoxyribonucleoside 5'-diphosphate + ATP = a 2'-deoxyribonucleoside 5'-triphosphate + ADP</text>
        <dbReference type="Rhea" id="RHEA:44640"/>
        <dbReference type="ChEBI" id="CHEBI:30616"/>
        <dbReference type="ChEBI" id="CHEBI:61560"/>
        <dbReference type="ChEBI" id="CHEBI:73316"/>
        <dbReference type="ChEBI" id="CHEBI:456216"/>
        <dbReference type="EC" id="2.7.4.6"/>
    </reaction>
</comment>
<comment type="catalytic activity">
    <reaction evidence="1">
        <text>a ribonucleoside 5'-diphosphate + ATP = a ribonucleoside 5'-triphosphate + ADP</text>
        <dbReference type="Rhea" id="RHEA:18113"/>
        <dbReference type="ChEBI" id="CHEBI:30616"/>
        <dbReference type="ChEBI" id="CHEBI:57930"/>
        <dbReference type="ChEBI" id="CHEBI:61557"/>
        <dbReference type="ChEBI" id="CHEBI:456216"/>
        <dbReference type="EC" id="2.7.4.6"/>
    </reaction>
</comment>
<comment type="cofactor">
    <cofactor evidence="1">
        <name>Mg(2+)</name>
        <dbReference type="ChEBI" id="CHEBI:18420"/>
    </cofactor>
</comment>
<comment type="subunit">
    <text evidence="1">Homotetramer.</text>
</comment>
<comment type="subcellular location">
    <subcellularLocation>
        <location evidence="1">Cytoplasm</location>
    </subcellularLocation>
</comment>
<comment type="similarity">
    <text evidence="1">Belongs to the NDK family.</text>
</comment>
<accession>A9HJV3</accession>
<accession>B5ZKS4</accession>
<name>NDK_GLUDA</name>
<sequence length="140" mass="15203">MATERTLSIIKPDATRRNLTGKINAVFEDAGLRIVAQKRVQLSEAEAGAFYAVHKDRPFYGELVSFMVSGPVVLQVLEGENAVLKHRDVMGATDPKKAAPGTVRAQFAESIEANSVHGSDSLENANTEIAFFFAQTEILP</sequence>
<gene>
    <name evidence="1" type="primary">ndk</name>
    <name type="ordered locus">GDI2014</name>
    <name type="ordered locus">Gdia_0237</name>
</gene>
<feature type="chain" id="PRO_1000080965" description="Nucleoside diphosphate kinase">
    <location>
        <begin position="1"/>
        <end position="140"/>
    </location>
</feature>
<feature type="active site" description="Pros-phosphohistidine intermediate" evidence="1">
    <location>
        <position position="117"/>
    </location>
</feature>
<feature type="binding site" evidence="1">
    <location>
        <position position="11"/>
    </location>
    <ligand>
        <name>ATP</name>
        <dbReference type="ChEBI" id="CHEBI:30616"/>
    </ligand>
</feature>
<feature type="binding site" evidence="1">
    <location>
        <position position="59"/>
    </location>
    <ligand>
        <name>ATP</name>
        <dbReference type="ChEBI" id="CHEBI:30616"/>
    </ligand>
</feature>
<feature type="binding site" evidence="1">
    <location>
        <position position="87"/>
    </location>
    <ligand>
        <name>ATP</name>
        <dbReference type="ChEBI" id="CHEBI:30616"/>
    </ligand>
</feature>
<feature type="binding site" evidence="1">
    <location>
        <position position="93"/>
    </location>
    <ligand>
        <name>ATP</name>
        <dbReference type="ChEBI" id="CHEBI:30616"/>
    </ligand>
</feature>
<feature type="binding site" evidence="1">
    <location>
        <position position="104"/>
    </location>
    <ligand>
        <name>ATP</name>
        <dbReference type="ChEBI" id="CHEBI:30616"/>
    </ligand>
</feature>
<feature type="binding site" evidence="1">
    <location>
        <position position="114"/>
    </location>
    <ligand>
        <name>ATP</name>
        <dbReference type="ChEBI" id="CHEBI:30616"/>
    </ligand>
</feature>
<feature type="sequence conflict" description="In Ref. 2; ACI50034." evidence="2" ref="2">
    <original>P</original>
    <variation>A</variation>
    <location>
        <position position="100"/>
    </location>
</feature>
<dbReference type="EC" id="2.7.4.6" evidence="1"/>
<dbReference type="EMBL" id="AM889285">
    <property type="protein sequence ID" value="CAP55957.1"/>
    <property type="molecule type" value="Genomic_DNA"/>
</dbReference>
<dbReference type="EMBL" id="CP001189">
    <property type="protein sequence ID" value="ACI50034.1"/>
    <property type="molecule type" value="Genomic_DNA"/>
</dbReference>
<dbReference type="RefSeq" id="WP_012225710.1">
    <property type="nucleotide sequence ID" value="NC_010125.1"/>
</dbReference>
<dbReference type="RefSeq" id="WP_012553028.1">
    <property type="nucleotide sequence ID" value="NC_011365.1"/>
</dbReference>
<dbReference type="SMR" id="A9HJV3"/>
<dbReference type="STRING" id="272568.GDI2014"/>
<dbReference type="KEGG" id="gdi:GDI2014"/>
<dbReference type="KEGG" id="gdj:Gdia_0237"/>
<dbReference type="eggNOG" id="COG0105">
    <property type="taxonomic scope" value="Bacteria"/>
</dbReference>
<dbReference type="HOGENOM" id="CLU_060216_8_1_5"/>
<dbReference type="OrthoDB" id="9801161at2"/>
<dbReference type="Proteomes" id="UP000001176">
    <property type="component" value="Chromosome"/>
</dbReference>
<dbReference type="GO" id="GO:0005737">
    <property type="term" value="C:cytoplasm"/>
    <property type="evidence" value="ECO:0007669"/>
    <property type="project" value="UniProtKB-SubCell"/>
</dbReference>
<dbReference type="GO" id="GO:0005524">
    <property type="term" value="F:ATP binding"/>
    <property type="evidence" value="ECO:0007669"/>
    <property type="project" value="UniProtKB-UniRule"/>
</dbReference>
<dbReference type="GO" id="GO:0046872">
    <property type="term" value="F:metal ion binding"/>
    <property type="evidence" value="ECO:0007669"/>
    <property type="project" value="UniProtKB-KW"/>
</dbReference>
<dbReference type="GO" id="GO:0004550">
    <property type="term" value="F:nucleoside diphosphate kinase activity"/>
    <property type="evidence" value="ECO:0007669"/>
    <property type="project" value="UniProtKB-UniRule"/>
</dbReference>
<dbReference type="GO" id="GO:0006241">
    <property type="term" value="P:CTP biosynthetic process"/>
    <property type="evidence" value="ECO:0007669"/>
    <property type="project" value="UniProtKB-UniRule"/>
</dbReference>
<dbReference type="GO" id="GO:0006183">
    <property type="term" value="P:GTP biosynthetic process"/>
    <property type="evidence" value="ECO:0007669"/>
    <property type="project" value="UniProtKB-UniRule"/>
</dbReference>
<dbReference type="GO" id="GO:0006228">
    <property type="term" value="P:UTP biosynthetic process"/>
    <property type="evidence" value="ECO:0007669"/>
    <property type="project" value="UniProtKB-UniRule"/>
</dbReference>
<dbReference type="CDD" id="cd04413">
    <property type="entry name" value="NDPk_I"/>
    <property type="match status" value="1"/>
</dbReference>
<dbReference type="FunFam" id="3.30.70.141:FF:000001">
    <property type="entry name" value="Nucleoside diphosphate kinase"/>
    <property type="match status" value="1"/>
</dbReference>
<dbReference type="Gene3D" id="3.30.70.141">
    <property type="entry name" value="Nucleoside diphosphate kinase-like domain"/>
    <property type="match status" value="1"/>
</dbReference>
<dbReference type="HAMAP" id="MF_00451">
    <property type="entry name" value="NDP_kinase"/>
    <property type="match status" value="1"/>
</dbReference>
<dbReference type="InterPro" id="IPR034907">
    <property type="entry name" value="NDK-like_dom"/>
</dbReference>
<dbReference type="InterPro" id="IPR036850">
    <property type="entry name" value="NDK-like_dom_sf"/>
</dbReference>
<dbReference type="InterPro" id="IPR001564">
    <property type="entry name" value="Nucleoside_diP_kinase"/>
</dbReference>
<dbReference type="InterPro" id="IPR023005">
    <property type="entry name" value="Nucleoside_diP_kinase_AS"/>
</dbReference>
<dbReference type="NCBIfam" id="NF001908">
    <property type="entry name" value="PRK00668.1"/>
    <property type="match status" value="1"/>
</dbReference>
<dbReference type="PANTHER" id="PTHR46161">
    <property type="entry name" value="NUCLEOSIDE DIPHOSPHATE KINASE"/>
    <property type="match status" value="1"/>
</dbReference>
<dbReference type="PANTHER" id="PTHR46161:SF3">
    <property type="entry name" value="NUCLEOSIDE DIPHOSPHATE KINASE DDB_G0292928-RELATED"/>
    <property type="match status" value="1"/>
</dbReference>
<dbReference type="Pfam" id="PF00334">
    <property type="entry name" value="NDK"/>
    <property type="match status" value="1"/>
</dbReference>
<dbReference type="PRINTS" id="PR01243">
    <property type="entry name" value="NUCDPKINASE"/>
</dbReference>
<dbReference type="SMART" id="SM00562">
    <property type="entry name" value="NDK"/>
    <property type="match status" value="1"/>
</dbReference>
<dbReference type="SUPFAM" id="SSF54919">
    <property type="entry name" value="Nucleoside diphosphate kinase, NDK"/>
    <property type="match status" value="1"/>
</dbReference>
<dbReference type="PROSITE" id="PS00469">
    <property type="entry name" value="NDPK"/>
    <property type="match status" value="1"/>
</dbReference>
<dbReference type="PROSITE" id="PS51374">
    <property type="entry name" value="NDPK_LIKE"/>
    <property type="match status" value="1"/>
</dbReference>
<protein>
    <recommendedName>
        <fullName evidence="1">Nucleoside diphosphate kinase</fullName>
        <shortName evidence="1">NDK</shortName>
        <shortName evidence="1">NDP kinase</shortName>
        <ecNumber evidence="1">2.7.4.6</ecNumber>
    </recommendedName>
    <alternativeName>
        <fullName evidence="1">Nucleoside-2-P kinase</fullName>
    </alternativeName>
</protein>